<name>LIPA_BUCBP</name>
<protein>
    <recommendedName>
        <fullName evidence="1">Lipoyl synthase</fullName>
        <ecNumber evidence="1">2.8.1.8</ecNumber>
    </recommendedName>
    <alternativeName>
        <fullName evidence="1">Lip-syn</fullName>
        <shortName evidence="1">LS</shortName>
    </alternativeName>
    <alternativeName>
        <fullName evidence="1">Lipoate synthase</fullName>
    </alternativeName>
    <alternativeName>
        <fullName evidence="1">Lipoic acid synthase</fullName>
    </alternativeName>
    <alternativeName>
        <fullName evidence="1">Sulfur insertion protein LipA</fullName>
    </alternativeName>
</protein>
<comment type="function">
    <text evidence="1">Catalyzes the radical-mediated insertion of two sulfur atoms into the C-6 and C-8 positions of the octanoyl moiety bound to the lipoyl domains of lipoate-dependent enzymes, thereby converting the octanoylated domains into lipoylated derivatives.</text>
</comment>
<comment type="catalytic activity">
    <reaction evidence="1">
        <text>[[Fe-S] cluster scaffold protein carrying a second [4Fe-4S](2+) cluster] + N(6)-octanoyl-L-lysyl-[protein] + 2 oxidized [2Fe-2S]-[ferredoxin] + 2 S-adenosyl-L-methionine + 4 H(+) = [[Fe-S] cluster scaffold protein] + N(6)-[(R)-dihydrolipoyl]-L-lysyl-[protein] + 4 Fe(3+) + 2 hydrogen sulfide + 2 5'-deoxyadenosine + 2 L-methionine + 2 reduced [2Fe-2S]-[ferredoxin]</text>
        <dbReference type="Rhea" id="RHEA:16585"/>
        <dbReference type="Rhea" id="RHEA-COMP:9928"/>
        <dbReference type="Rhea" id="RHEA-COMP:10000"/>
        <dbReference type="Rhea" id="RHEA-COMP:10001"/>
        <dbReference type="Rhea" id="RHEA-COMP:10475"/>
        <dbReference type="Rhea" id="RHEA-COMP:14568"/>
        <dbReference type="Rhea" id="RHEA-COMP:14569"/>
        <dbReference type="ChEBI" id="CHEBI:15378"/>
        <dbReference type="ChEBI" id="CHEBI:17319"/>
        <dbReference type="ChEBI" id="CHEBI:29034"/>
        <dbReference type="ChEBI" id="CHEBI:29919"/>
        <dbReference type="ChEBI" id="CHEBI:33722"/>
        <dbReference type="ChEBI" id="CHEBI:33737"/>
        <dbReference type="ChEBI" id="CHEBI:33738"/>
        <dbReference type="ChEBI" id="CHEBI:57844"/>
        <dbReference type="ChEBI" id="CHEBI:59789"/>
        <dbReference type="ChEBI" id="CHEBI:78809"/>
        <dbReference type="ChEBI" id="CHEBI:83100"/>
        <dbReference type="EC" id="2.8.1.8"/>
    </reaction>
</comment>
<comment type="cofactor">
    <cofactor evidence="1">
        <name>[4Fe-4S] cluster</name>
        <dbReference type="ChEBI" id="CHEBI:49883"/>
    </cofactor>
    <text evidence="1">Binds 2 [4Fe-4S] clusters per subunit. One cluster is coordinated with 3 cysteines and an exchangeable S-adenosyl-L-methionine.</text>
</comment>
<comment type="pathway">
    <text evidence="1">Protein modification; protein lipoylation via endogenous pathway; protein N(6)-(lipoyl)lysine from octanoyl-[acyl-carrier-protein]: step 2/2.</text>
</comment>
<comment type="subcellular location">
    <subcellularLocation>
        <location evidence="1">Cytoplasm</location>
    </subcellularLocation>
</comment>
<comment type="similarity">
    <text evidence="1">Belongs to the radical SAM superfamily. Lipoyl synthase family.</text>
</comment>
<gene>
    <name evidence="1" type="primary">lipA</name>
    <name type="ordered locus">bbp_250</name>
</gene>
<keyword id="KW-0004">4Fe-4S</keyword>
<keyword id="KW-0963">Cytoplasm</keyword>
<keyword id="KW-0408">Iron</keyword>
<keyword id="KW-0411">Iron-sulfur</keyword>
<keyword id="KW-0479">Metal-binding</keyword>
<keyword id="KW-1185">Reference proteome</keyword>
<keyword id="KW-0949">S-adenosyl-L-methionine</keyword>
<keyword id="KW-0808">Transferase</keyword>
<evidence type="ECO:0000255" key="1">
    <source>
        <dbReference type="HAMAP-Rule" id="MF_00206"/>
    </source>
</evidence>
<evidence type="ECO:0000255" key="2">
    <source>
        <dbReference type="PROSITE-ProRule" id="PRU01266"/>
    </source>
</evidence>
<accession>Q89AL7</accession>
<organism>
    <name type="scientific">Buchnera aphidicola subsp. Baizongia pistaciae (strain Bp)</name>
    <dbReference type="NCBI Taxonomy" id="224915"/>
    <lineage>
        <taxon>Bacteria</taxon>
        <taxon>Pseudomonadati</taxon>
        <taxon>Pseudomonadota</taxon>
        <taxon>Gammaproteobacteria</taxon>
        <taxon>Enterobacterales</taxon>
        <taxon>Erwiniaceae</taxon>
        <taxon>Buchnera</taxon>
    </lineage>
</organism>
<reference key="1">
    <citation type="journal article" date="2003" name="Proc. Natl. Acad. Sci. U.S.A.">
        <title>Reductive genome evolution in Buchnera aphidicola.</title>
        <authorList>
            <person name="van Ham R.C.H.J."/>
            <person name="Kamerbeek J."/>
            <person name="Palacios C."/>
            <person name="Rausell C."/>
            <person name="Abascal F."/>
            <person name="Bastolla U."/>
            <person name="Fernandez J.M."/>
            <person name="Jimenez L."/>
            <person name="Postigo M."/>
            <person name="Silva F.J."/>
            <person name="Tamames J."/>
            <person name="Viguera E."/>
            <person name="Latorre A."/>
            <person name="Valencia A."/>
            <person name="Moran F."/>
            <person name="Moya A."/>
        </authorList>
    </citation>
    <scope>NUCLEOTIDE SEQUENCE [LARGE SCALE GENOMIC DNA]</scope>
    <source>
        <strain>Bp</strain>
    </source>
</reference>
<sequence>MRTKNSKIINSEQDIFRNKVIPIKFLSNYNNEILKKPQWMKIKFPVSTNKIKNLTLILRQHNLNTVCEQALCPNLAECFNRGTATFMILGSICTRRCPFCAVSHGKPSLVNKNEPQQLARVIFDMKINYVVITSVVRDDLKDRGAQHFSNCIQEIRNKNNVKIEILVPDFRGMMRESCKIISMNPPNVFNHNLENVPRLYKLIRPGASYIRSLKLLEFFKKLNPNVPTKSGLILGLGETYKEIVHVINDLLDHGVTILTIGQYLQPSSKHFPVQKYITPDEFKKIKNYALSIGFKKVFCGPLIRSSYHAEKYFE</sequence>
<dbReference type="EC" id="2.8.1.8" evidence="1"/>
<dbReference type="EMBL" id="AE016826">
    <property type="protein sequence ID" value="AAO26977.1"/>
    <property type="molecule type" value="Genomic_DNA"/>
</dbReference>
<dbReference type="RefSeq" id="WP_011091378.1">
    <property type="nucleotide sequence ID" value="NC_004545.1"/>
</dbReference>
<dbReference type="SMR" id="Q89AL7"/>
<dbReference type="STRING" id="224915.bbp_250"/>
<dbReference type="KEGG" id="bab:bbp_250"/>
<dbReference type="eggNOG" id="COG0320">
    <property type="taxonomic scope" value="Bacteria"/>
</dbReference>
<dbReference type="HOGENOM" id="CLU_033144_2_1_6"/>
<dbReference type="OrthoDB" id="9787898at2"/>
<dbReference type="UniPathway" id="UPA00538">
    <property type="reaction ID" value="UER00593"/>
</dbReference>
<dbReference type="Proteomes" id="UP000000601">
    <property type="component" value="Chromosome"/>
</dbReference>
<dbReference type="GO" id="GO:0005737">
    <property type="term" value="C:cytoplasm"/>
    <property type="evidence" value="ECO:0007669"/>
    <property type="project" value="UniProtKB-SubCell"/>
</dbReference>
<dbReference type="GO" id="GO:0051539">
    <property type="term" value="F:4 iron, 4 sulfur cluster binding"/>
    <property type="evidence" value="ECO:0007669"/>
    <property type="project" value="UniProtKB-UniRule"/>
</dbReference>
<dbReference type="GO" id="GO:0016992">
    <property type="term" value="F:lipoate synthase activity"/>
    <property type="evidence" value="ECO:0007669"/>
    <property type="project" value="UniProtKB-UniRule"/>
</dbReference>
<dbReference type="GO" id="GO:0046872">
    <property type="term" value="F:metal ion binding"/>
    <property type="evidence" value="ECO:0007669"/>
    <property type="project" value="UniProtKB-KW"/>
</dbReference>
<dbReference type="FunFam" id="3.20.20.70:FF:000040">
    <property type="entry name" value="Lipoyl synthase"/>
    <property type="match status" value="1"/>
</dbReference>
<dbReference type="Gene3D" id="3.20.20.70">
    <property type="entry name" value="Aldolase class I"/>
    <property type="match status" value="1"/>
</dbReference>
<dbReference type="HAMAP" id="MF_00206">
    <property type="entry name" value="Lipoyl_synth"/>
    <property type="match status" value="1"/>
</dbReference>
<dbReference type="InterPro" id="IPR013785">
    <property type="entry name" value="Aldolase_TIM"/>
</dbReference>
<dbReference type="InterPro" id="IPR006638">
    <property type="entry name" value="Elp3/MiaA/NifB-like_rSAM"/>
</dbReference>
<dbReference type="InterPro" id="IPR003698">
    <property type="entry name" value="Lipoyl_synth"/>
</dbReference>
<dbReference type="InterPro" id="IPR007197">
    <property type="entry name" value="rSAM"/>
</dbReference>
<dbReference type="NCBIfam" id="TIGR00510">
    <property type="entry name" value="lipA"/>
    <property type="match status" value="1"/>
</dbReference>
<dbReference type="NCBIfam" id="NF004019">
    <property type="entry name" value="PRK05481.1"/>
    <property type="match status" value="1"/>
</dbReference>
<dbReference type="NCBIfam" id="NF009544">
    <property type="entry name" value="PRK12928.1"/>
    <property type="match status" value="1"/>
</dbReference>
<dbReference type="PANTHER" id="PTHR10949">
    <property type="entry name" value="LIPOYL SYNTHASE"/>
    <property type="match status" value="1"/>
</dbReference>
<dbReference type="PANTHER" id="PTHR10949:SF0">
    <property type="entry name" value="LIPOYL SYNTHASE, MITOCHONDRIAL"/>
    <property type="match status" value="1"/>
</dbReference>
<dbReference type="Pfam" id="PF04055">
    <property type="entry name" value="Radical_SAM"/>
    <property type="match status" value="1"/>
</dbReference>
<dbReference type="PIRSF" id="PIRSF005963">
    <property type="entry name" value="Lipoyl_synth"/>
    <property type="match status" value="1"/>
</dbReference>
<dbReference type="SFLD" id="SFLDF00271">
    <property type="entry name" value="lipoyl_synthase"/>
    <property type="match status" value="1"/>
</dbReference>
<dbReference type="SFLD" id="SFLDS00029">
    <property type="entry name" value="Radical_SAM"/>
    <property type="match status" value="1"/>
</dbReference>
<dbReference type="SMART" id="SM00729">
    <property type="entry name" value="Elp3"/>
    <property type="match status" value="1"/>
</dbReference>
<dbReference type="SUPFAM" id="SSF102114">
    <property type="entry name" value="Radical SAM enzymes"/>
    <property type="match status" value="1"/>
</dbReference>
<dbReference type="PROSITE" id="PS51918">
    <property type="entry name" value="RADICAL_SAM"/>
    <property type="match status" value="1"/>
</dbReference>
<feature type="chain" id="PRO_0000102299" description="Lipoyl synthase">
    <location>
        <begin position="1"/>
        <end position="314"/>
    </location>
</feature>
<feature type="domain" description="Radical SAM core" evidence="2">
    <location>
        <begin position="79"/>
        <end position="295"/>
    </location>
</feature>
<feature type="binding site" evidence="1">
    <location>
        <position position="67"/>
    </location>
    <ligand>
        <name>[4Fe-4S] cluster</name>
        <dbReference type="ChEBI" id="CHEBI:49883"/>
        <label>1</label>
    </ligand>
</feature>
<feature type="binding site" evidence="1">
    <location>
        <position position="72"/>
    </location>
    <ligand>
        <name>[4Fe-4S] cluster</name>
        <dbReference type="ChEBI" id="CHEBI:49883"/>
        <label>1</label>
    </ligand>
</feature>
<feature type="binding site" evidence="1">
    <location>
        <position position="78"/>
    </location>
    <ligand>
        <name>[4Fe-4S] cluster</name>
        <dbReference type="ChEBI" id="CHEBI:49883"/>
        <label>1</label>
    </ligand>
</feature>
<feature type="binding site" evidence="1">
    <location>
        <position position="93"/>
    </location>
    <ligand>
        <name>[4Fe-4S] cluster</name>
        <dbReference type="ChEBI" id="CHEBI:49883"/>
        <label>2</label>
        <note>4Fe-4S-S-AdoMet</note>
    </ligand>
</feature>
<feature type="binding site" evidence="1">
    <location>
        <position position="97"/>
    </location>
    <ligand>
        <name>[4Fe-4S] cluster</name>
        <dbReference type="ChEBI" id="CHEBI:49883"/>
        <label>2</label>
        <note>4Fe-4S-S-AdoMet</note>
    </ligand>
</feature>
<feature type="binding site" evidence="1">
    <location>
        <position position="100"/>
    </location>
    <ligand>
        <name>[4Fe-4S] cluster</name>
        <dbReference type="ChEBI" id="CHEBI:49883"/>
        <label>2</label>
        <note>4Fe-4S-S-AdoMet</note>
    </ligand>
</feature>
<feature type="binding site" evidence="1">
    <location>
        <position position="306"/>
    </location>
    <ligand>
        <name>[4Fe-4S] cluster</name>
        <dbReference type="ChEBI" id="CHEBI:49883"/>
        <label>1</label>
    </ligand>
</feature>
<proteinExistence type="inferred from homology"/>